<gene>
    <name evidence="1" type="primary">cysS</name>
    <name type="ordered locus">Rxyl_2173</name>
</gene>
<keyword id="KW-0030">Aminoacyl-tRNA synthetase</keyword>
<keyword id="KW-0067">ATP-binding</keyword>
<keyword id="KW-0963">Cytoplasm</keyword>
<keyword id="KW-0436">Ligase</keyword>
<keyword id="KW-0479">Metal-binding</keyword>
<keyword id="KW-0547">Nucleotide-binding</keyword>
<keyword id="KW-0648">Protein biosynthesis</keyword>
<keyword id="KW-1185">Reference proteome</keyword>
<keyword id="KW-0862">Zinc</keyword>
<protein>
    <recommendedName>
        <fullName evidence="1">Cysteine--tRNA ligase</fullName>
        <ecNumber evidence="1">6.1.1.16</ecNumber>
    </recommendedName>
    <alternativeName>
        <fullName evidence="1">Cysteinyl-tRNA synthetase</fullName>
        <shortName evidence="1">CysRS</shortName>
    </alternativeName>
</protein>
<name>SYC_RUBXD</name>
<evidence type="ECO:0000255" key="1">
    <source>
        <dbReference type="HAMAP-Rule" id="MF_00041"/>
    </source>
</evidence>
<proteinExistence type="inferred from homology"/>
<comment type="catalytic activity">
    <reaction evidence="1">
        <text>tRNA(Cys) + L-cysteine + ATP = L-cysteinyl-tRNA(Cys) + AMP + diphosphate</text>
        <dbReference type="Rhea" id="RHEA:17773"/>
        <dbReference type="Rhea" id="RHEA-COMP:9661"/>
        <dbReference type="Rhea" id="RHEA-COMP:9679"/>
        <dbReference type="ChEBI" id="CHEBI:30616"/>
        <dbReference type="ChEBI" id="CHEBI:33019"/>
        <dbReference type="ChEBI" id="CHEBI:35235"/>
        <dbReference type="ChEBI" id="CHEBI:78442"/>
        <dbReference type="ChEBI" id="CHEBI:78517"/>
        <dbReference type="ChEBI" id="CHEBI:456215"/>
        <dbReference type="EC" id="6.1.1.16"/>
    </reaction>
</comment>
<comment type="cofactor">
    <cofactor evidence="1">
        <name>Zn(2+)</name>
        <dbReference type="ChEBI" id="CHEBI:29105"/>
    </cofactor>
    <text evidence="1">Binds 1 zinc ion per subunit.</text>
</comment>
<comment type="subunit">
    <text evidence="1">Monomer.</text>
</comment>
<comment type="subcellular location">
    <subcellularLocation>
        <location evidence="1">Cytoplasm</location>
    </subcellularLocation>
</comment>
<comment type="similarity">
    <text evidence="1">Belongs to the class-I aminoacyl-tRNA synthetase family.</text>
</comment>
<organism>
    <name type="scientific">Rubrobacter xylanophilus (strain DSM 9941 / JCM 11954 / NBRC 16129 / PRD-1)</name>
    <dbReference type="NCBI Taxonomy" id="266117"/>
    <lineage>
        <taxon>Bacteria</taxon>
        <taxon>Bacillati</taxon>
        <taxon>Actinomycetota</taxon>
        <taxon>Rubrobacteria</taxon>
        <taxon>Rubrobacterales</taxon>
        <taxon>Rubrobacteraceae</taxon>
        <taxon>Rubrobacter</taxon>
    </lineage>
</organism>
<accession>Q1AU11</accession>
<dbReference type="EC" id="6.1.1.16" evidence="1"/>
<dbReference type="EMBL" id="CP000386">
    <property type="protein sequence ID" value="ABG05117.1"/>
    <property type="molecule type" value="Genomic_DNA"/>
</dbReference>
<dbReference type="RefSeq" id="WP_011565131.1">
    <property type="nucleotide sequence ID" value="NC_008148.1"/>
</dbReference>
<dbReference type="SMR" id="Q1AU11"/>
<dbReference type="STRING" id="266117.Rxyl_2173"/>
<dbReference type="KEGG" id="rxy:Rxyl_2173"/>
<dbReference type="eggNOG" id="COG0215">
    <property type="taxonomic scope" value="Bacteria"/>
</dbReference>
<dbReference type="HOGENOM" id="CLU_013528_0_1_11"/>
<dbReference type="OrthoDB" id="9815130at2"/>
<dbReference type="PhylomeDB" id="Q1AU11"/>
<dbReference type="Proteomes" id="UP000006637">
    <property type="component" value="Chromosome"/>
</dbReference>
<dbReference type="GO" id="GO:0005829">
    <property type="term" value="C:cytosol"/>
    <property type="evidence" value="ECO:0007669"/>
    <property type="project" value="TreeGrafter"/>
</dbReference>
<dbReference type="GO" id="GO:0005524">
    <property type="term" value="F:ATP binding"/>
    <property type="evidence" value="ECO:0007669"/>
    <property type="project" value="UniProtKB-UniRule"/>
</dbReference>
<dbReference type="GO" id="GO:0004817">
    <property type="term" value="F:cysteine-tRNA ligase activity"/>
    <property type="evidence" value="ECO:0007669"/>
    <property type="project" value="UniProtKB-UniRule"/>
</dbReference>
<dbReference type="GO" id="GO:0008270">
    <property type="term" value="F:zinc ion binding"/>
    <property type="evidence" value="ECO:0007669"/>
    <property type="project" value="UniProtKB-UniRule"/>
</dbReference>
<dbReference type="GO" id="GO:0006423">
    <property type="term" value="P:cysteinyl-tRNA aminoacylation"/>
    <property type="evidence" value="ECO:0007669"/>
    <property type="project" value="UniProtKB-UniRule"/>
</dbReference>
<dbReference type="CDD" id="cd00672">
    <property type="entry name" value="CysRS_core"/>
    <property type="match status" value="1"/>
</dbReference>
<dbReference type="Gene3D" id="1.20.120.1910">
    <property type="entry name" value="Cysteine-tRNA ligase, C-terminal anti-codon recognition domain"/>
    <property type="match status" value="1"/>
</dbReference>
<dbReference type="Gene3D" id="3.40.50.620">
    <property type="entry name" value="HUPs"/>
    <property type="match status" value="1"/>
</dbReference>
<dbReference type="HAMAP" id="MF_00041">
    <property type="entry name" value="Cys_tRNA_synth"/>
    <property type="match status" value="1"/>
</dbReference>
<dbReference type="InterPro" id="IPR015803">
    <property type="entry name" value="Cys-tRNA-ligase"/>
</dbReference>
<dbReference type="InterPro" id="IPR015273">
    <property type="entry name" value="Cys-tRNA-synt_Ia_DALR"/>
</dbReference>
<dbReference type="InterPro" id="IPR024909">
    <property type="entry name" value="Cys-tRNA/MSH_ligase"/>
</dbReference>
<dbReference type="InterPro" id="IPR014729">
    <property type="entry name" value="Rossmann-like_a/b/a_fold"/>
</dbReference>
<dbReference type="InterPro" id="IPR032678">
    <property type="entry name" value="tRNA-synt_1_cat_dom"/>
</dbReference>
<dbReference type="InterPro" id="IPR009080">
    <property type="entry name" value="tRNAsynth_Ia_anticodon-bd"/>
</dbReference>
<dbReference type="NCBIfam" id="TIGR00435">
    <property type="entry name" value="cysS"/>
    <property type="match status" value="1"/>
</dbReference>
<dbReference type="PANTHER" id="PTHR10890:SF3">
    <property type="entry name" value="CYSTEINE--TRNA LIGASE, CYTOPLASMIC"/>
    <property type="match status" value="1"/>
</dbReference>
<dbReference type="PANTHER" id="PTHR10890">
    <property type="entry name" value="CYSTEINYL-TRNA SYNTHETASE"/>
    <property type="match status" value="1"/>
</dbReference>
<dbReference type="Pfam" id="PF09190">
    <property type="entry name" value="DALR_2"/>
    <property type="match status" value="1"/>
</dbReference>
<dbReference type="Pfam" id="PF01406">
    <property type="entry name" value="tRNA-synt_1e"/>
    <property type="match status" value="1"/>
</dbReference>
<dbReference type="PRINTS" id="PR00983">
    <property type="entry name" value="TRNASYNTHCYS"/>
</dbReference>
<dbReference type="SMART" id="SM00840">
    <property type="entry name" value="DALR_2"/>
    <property type="match status" value="1"/>
</dbReference>
<dbReference type="SUPFAM" id="SSF47323">
    <property type="entry name" value="Anticodon-binding domain of a subclass of class I aminoacyl-tRNA synthetases"/>
    <property type="match status" value="1"/>
</dbReference>
<dbReference type="SUPFAM" id="SSF52374">
    <property type="entry name" value="Nucleotidylyl transferase"/>
    <property type="match status" value="1"/>
</dbReference>
<reference key="1">
    <citation type="submission" date="2006-06" db="EMBL/GenBank/DDBJ databases">
        <title>Complete sequence of Rubrobacter xylanophilus DSM 9941.</title>
        <authorList>
            <consortium name="US DOE Joint Genome Institute"/>
            <person name="Copeland A."/>
            <person name="Lucas S."/>
            <person name="Lapidus A."/>
            <person name="Barry K."/>
            <person name="Detter J.C."/>
            <person name="Glavina del Rio T."/>
            <person name="Hammon N."/>
            <person name="Israni S."/>
            <person name="Dalin E."/>
            <person name="Tice H."/>
            <person name="Pitluck S."/>
            <person name="Munk A.C."/>
            <person name="Brettin T."/>
            <person name="Bruce D."/>
            <person name="Han C."/>
            <person name="Tapia R."/>
            <person name="Gilna P."/>
            <person name="Schmutz J."/>
            <person name="Larimer F."/>
            <person name="Land M."/>
            <person name="Hauser L."/>
            <person name="Kyrpides N."/>
            <person name="Lykidis A."/>
            <person name="da Costa M.S."/>
            <person name="Rainey F.A."/>
            <person name="Empadinhas N."/>
            <person name="Jolivet E."/>
            <person name="Battista J.R."/>
            <person name="Richardson P."/>
        </authorList>
    </citation>
    <scope>NUCLEOTIDE SEQUENCE [LARGE SCALE GENOMIC DNA]</scope>
    <source>
        <strain>DSM 9941 / JCM 11954 / NBRC 16129 / PRD-1</strain>
    </source>
</reference>
<feature type="chain" id="PRO_0000332892" description="Cysteine--tRNA ligase">
    <location>
        <begin position="1"/>
        <end position="470"/>
    </location>
</feature>
<feature type="short sequence motif" description="'HIGH' region">
    <location>
        <begin position="29"/>
        <end position="39"/>
    </location>
</feature>
<feature type="short sequence motif" description="'KMSKS' region">
    <location>
        <begin position="265"/>
        <end position="269"/>
    </location>
</feature>
<feature type="binding site" evidence="1">
    <location>
        <position position="27"/>
    </location>
    <ligand>
        <name>Zn(2+)</name>
        <dbReference type="ChEBI" id="CHEBI:29105"/>
    </ligand>
</feature>
<feature type="binding site" evidence="1">
    <location>
        <position position="207"/>
    </location>
    <ligand>
        <name>Zn(2+)</name>
        <dbReference type="ChEBI" id="CHEBI:29105"/>
    </ligand>
</feature>
<feature type="binding site" evidence="1">
    <location>
        <position position="232"/>
    </location>
    <ligand>
        <name>Zn(2+)</name>
        <dbReference type="ChEBI" id="CHEBI:29105"/>
    </ligand>
</feature>
<feature type="binding site" evidence="1">
    <location>
        <position position="236"/>
    </location>
    <ligand>
        <name>Zn(2+)</name>
        <dbReference type="ChEBI" id="CHEBI:29105"/>
    </ligand>
</feature>
<feature type="binding site" evidence="1">
    <location>
        <position position="268"/>
    </location>
    <ligand>
        <name>ATP</name>
        <dbReference type="ChEBI" id="CHEBI:30616"/>
    </ligand>
</feature>
<sequence length="470" mass="53062">MSVKVRDSLSGGLVEVGGDGRVGIYVCGPTVYNHIHIGNVRGHLFWDVAVRFLRSRGYRVKFVWNITDIDDKIINRANEEGVSWKEIVRRYTDSFHERLRLLGIGMPDVEPRATEHIPEMISLIEELIRRGHAYPAPNGDVYYAVETFPRYGALSKQRPEEMKITEKGQTGHKRNPLDFTLWKASKPGEPSWESPWGPGRPGWHIECSAMVEKHLPGGADIHGGGSDIRFPHHENELAQSCGAHPDRPFVRAWAHHGMVRMAAQKMAKSVGNVVDAREATLKHGRDAIRMWLLQSHYSQPIDYSDEILEEKRRSCERLLRLYREISRSEASSPLSDRLAGELRERFDAAMREDFNTPEAIAALFDAASGAGREISSRPSAAGEFASLKEALQELLGLLGFDVAGERVSEVDGVRIRHAGEAPGEVLERVARRERARRRREWPEADRLREELLREGWAIEDTAAGPVLSRR</sequence>